<accession>Q1D0S2</accession>
<sequence>MTASDFQHQTVLLREAVDLLRPADGRVIIDGTLGGGGHSEALLASGATVVGVDRDPVALAAATARLGANPRFQGRAGNFAELPRVAADLLPVDGVLVDLGVSSPQLDVAERGFSFSKDGPLDMRMGPDGPTAAELIATTDERELVRILKDYGEEPFARPIARELKKALPTRTLEAAEVVKRAVPRKAWPNRIHVATRTFQALRMAVNGELEALDALLAAIPGLLKVGGRAAVIAFHSLEDRKVKEAFRALAGRCTCPPGLPVCVCSGVGDFALVTKKAVAASEAEVEANPRSRSAHLRVVEKLR</sequence>
<proteinExistence type="inferred from homology"/>
<comment type="function">
    <text evidence="1">Specifically methylates the N4 position of cytidine in position 1402 (C1402) of 16S rRNA.</text>
</comment>
<comment type="catalytic activity">
    <reaction evidence="1">
        <text>cytidine(1402) in 16S rRNA + S-adenosyl-L-methionine = N(4)-methylcytidine(1402) in 16S rRNA + S-adenosyl-L-homocysteine + H(+)</text>
        <dbReference type="Rhea" id="RHEA:42928"/>
        <dbReference type="Rhea" id="RHEA-COMP:10286"/>
        <dbReference type="Rhea" id="RHEA-COMP:10287"/>
        <dbReference type="ChEBI" id="CHEBI:15378"/>
        <dbReference type="ChEBI" id="CHEBI:57856"/>
        <dbReference type="ChEBI" id="CHEBI:59789"/>
        <dbReference type="ChEBI" id="CHEBI:74506"/>
        <dbReference type="ChEBI" id="CHEBI:82748"/>
        <dbReference type="EC" id="2.1.1.199"/>
    </reaction>
</comment>
<comment type="subcellular location">
    <subcellularLocation>
        <location evidence="1">Cytoplasm</location>
    </subcellularLocation>
</comment>
<comment type="similarity">
    <text evidence="1">Belongs to the methyltransferase superfamily. RsmH family.</text>
</comment>
<protein>
    <recommendedName>
        <fullName evidence="1">Ribosomal RNA small subunit methyltransferase H</fullName>
        <ecNumber evidence="1">2.1.1.199</ecNumber>
    </recommendedName>
    <alternativeName>
        <fullName evidence="1">16S rRNA m(4)C1402 methyltransferase</fullName>
    </alternativeName>
    <alternativeName>
        <fullName evidence="1">rRNA (cytosine-N(4)-)-methyltransferase RsmH</fullName>
    </alternativeName>
</protein>
<dbReference type="EC" id="2.1.1.199" evidence="1"/>
<dbReference type="EMBL" id="CP000113">
    <property type="protein sequence ID" value="ABF86325.1"/>
    <property type="molecule type" value="Genomic_DNA"/>
</dbReference>
<dbReference type="RefSeq" id="WP_011555566.1">
    <property type="nucleotide sequence ID" value="NC_008095.1"/>
</dbReference>
<dbReference type="SMR" id="Q1D0S2"/>
<dbReference type="STRING" id="246197.MXAN_5612"/>
<dbReference type="EnsemblBacteria" id="ABF86325">
    <property type="protein sequence ID" value="ABF86325"/>
    <property type="gene ID" value="MXAN_5612"/>
</dbReference>
<dbReference type="GeneID" id="41362858"/>
<dbReference type="KEGG" id="mxa:MXAN_5612"/>
<dbReference type="eggNOG" id="COG0275">
    <property type="taxonomic scope" value="Bacteria"/>
</dbReference>
<dbReference type="HOGENOM" id="CLU_038422_3_0_7"/>
<dbReference type="OrthoDB" id="9806637at2"/>
<dbReference type="Proteomes" id="UP000002402">
    <property type="component" value="Chromosome"/>
</dbReference>
<dbReference type="GO" id="GO:0005737">
    <property type="term" value="C:cytoplasm"/>
    <property type="evidence" value="ECO:0007669"/>
    <property type="project" value="UniProtKB-SubCell"/>
</dbReference>
<dbReference type="GO" id="GO:0071424">
    <property type="term" value="F:rRNA (cytosine-N4-)-methyltransferase activity"/>
    <property type="evidence" value="ECO:0007669"/>
    <property type="project" value="UniProtKB-UniRule"/>
</dbReference>
<dbReference type="GO" id="GO:0070475">
    <property type="term" value="P:rRNA base methylation"/>
    <property type="evidence" value="ECO:0007669"/>
    <property type="project" value="UniProtKB-UniRule"/>
</dbReference>
<dbReference type="Gene3D" id="1.10.150.170">
    <property type="entry name" value="Putative methyltransferase TM0872, insert domain"/>
    <property type="match status" value="1"/>
</dbReference>
<dbReference type="Gene3D" id="3.40.50.150">
    <property type="entry name" value="Vaccinia Virus protein VP39"/>
    <property type="match status" value="1"/>
</dbReference>
<dbReference type="HAMAP" id="MF_01007">
    <property type="entry name" value="16SrRNA_methyltr_H"/>
    <property type="match status" value="1"/>
</dbReference>
<dbReference type="InterPro" id="IPR002903">
    <property type="entry name" value="RsmH"/>
</dbReference>
<dbReference type="InterPro" id="IPR023397">
    <property type="entry name" value="SAM-dep_MeTrfase_MraW_recog"/>
</dbReference>
<dbReference type="InterPro" id="IPR029063">
    <property type="entry name" value="SAM-dependent_MTases_sf"/>
</dbReference>
<dbReference type="NCBIfam" id="TIGR00006">
    <property type="entry name" value="16S rRNA (cytosine(1402)-N(4))-methyltransferase RsmH"/>
    <property type="match status" value="1"/>
</dbReference>
<dbReference type="PANTHER" id="PTHR11265:SF0">
    <property type="entry name" value="12S RRNA N4-METHYLCYTIDINE METHYLTRANSFERASE"/>
    <property type="match status" value="1"/>
</dbReference>
<dbReference type="PANTHER" id="PTHR11265">
    <property type="entry name" value="S-ADENOSYL-METHYLTRANSFERASE MRAW"/>
    <property type="match status" value="1"/>
</dbReference>
<dbReference type="Pfam" id="PF01795">
    <property type="entry name" value="Methyltransf_5"/>
    <property type="match status" value="1"/>
</dbReference>
<dbReference type="PIRSF" id="PIRSF004486">
    <property type="entry name" value="MraW"/>
    <property type="match status" value="1"/>
</dbReference>
<dbReference type="SUPFAM" id="SSF81799">
    <property type="entry name" value="Putative methyltransferase TM0872, insert domain"/>
    <property type="match status" value="1"/>
</dbReference>
<dbReference type="SUPFAM" id="SSF53335">
    <property type="entry name" value="S-adenosyl-L-methionine-dependent methyltransferases"/>
    <property type="match status" value="1"/>
</dbReference>
<feature type="chain" id="PRO_0000318877" description="Ribosomal RNA small subunit methyltransferase H">
    <location>
        <begin position="1"/>
        <end position="304"/>
    </location>
</feature>
<feature type="binding site" evidence="1">
    <location>
        <begin position="36"/>
        <end position="38"/>
    </location>
    <ligand>
        <name>S-adenosyl-L-methionine</name>
        <dbReference type="ChEBI" id="CHEBI:59789"/>
    </ligand>
</feature>
<feature type="binding site" evidence="1">
    <location>
        <position position="53"/>
    </location>
    <ligand>
        <name>S-adenosyl-L-methionine</name>
        <dbReference type="ChEBI" id="CHEBI:59789"/>
    </ligand>
</feature>
<feature type="binding site" evidence="1">
    <location>
        <position position="79"/>
    </location>
    <ligand>
        <name>S-adenosyl-L-methionine</name>
        <dbReference type="ChEBI" id="CHEBI:59789"/>
    </ligand>
</feature>
<feature type="binding site" evidence="1">
    <location>
        <position position="98"/>
    </location>
    <ligand>
        <name>S-adenosyl-L-methionine</name>
        <dbReference type="ChEBI" id="CHEBI:59789"/>
    </ligand>
</feature>
<feature type="binding site" evidence="1">
    <location>
        <position position="105"/>
    </location>
    <ligand>
        <name>S-adenosyl-L-methionine</name>
        <dbReference type="ChEBI" id="CHEBI:59789"/>
    </ligand>
</feature>
<gene>
    <name evidence="1" type="primary">rsmH</name>
    <name type="synonym">mraW</name>
    <name type="ordered locus">MXAN_5612</name>
</gene>
<evidence type="ECO:0000255" key="1">
    <source>
        <dbReference type="HAMAP-Rule" id="MF_01007"/>
    </source>
</evidence>
<reference key="1">
    <citation type="journal article" date="2006" name="Proc. Natl. Acad. Sci. U.S.A.">
        <title>Evolution of sensory complexity recorded in a myxobacterial genome.</title>
        <authorList>
            <person name="Goldman B.S."/>
            <person name="Nierman W.C."/>
            <person name="Kaiser D."/>
            <person name="Slater S.C."/>
            <person name="Durkin A.S."/>
            <person name="Eisen J.A."/>
            <person name="Ronning C.M."/>
            <person name="Barbazuk W.B."/>
            <person name="Blanchard M."/>
            <person name="Field C."/>
            <person name="Halling C."/>
            <person name="Hinkle G."/>
            <person name="Iartchuk O."/>
            <person name="Kim H.S."/>
            <person name="Mackenzie C."/>
            <person name="Madupu R."/>
            <person name="Miller N."/>
            <person name="Shvartsbeyn A."/>
            <person name="Sullivan S.A."/>
            <person name="Vaudin M."/>
            <person name="Wiegand R."/>
            <person name="Kaplan H.B."/>
        </authorList>
    </citation>
    <scope>NUCLEOTIDE SEQUENCE [LARGE SCALE GENOMIC DNA]</scope>
    <source>
        <strain>DK1622</strain>
    </source>
</reference>
<name>RSMH_MYXXD</name>
<organism>
    <name type="scientific">Myxococcus xanthus (strain DK1622)</name>
    <dbReference type="NCBI Taxonomy" id="246197"/>
    <lineage>
        <taxon>Bacteria</taxon>
        <taxon>Pseudomonadati</taxon>
        <taxon>Myxococcota</taxon>
        <taxon>Myxococcia</taxon>
        <taxon>Myxococcales</taxon>
        <taxon>Cystobacterineae</taxon>
        <taxon>Myxococcaceae</taxon>
        <taxon>Myxococcus</taxon>
    </lineage>
</organism>
<keyword id="KW-0963">Cytoplasm</keyword>
<keyword id="KW-0489">Methyltransferase</keyword>
<keyword id="KW-1185">Reference proteome</keyword>
<keyword id="KW-0698">rRNA processing</keyword>
<keyword id="KW-0949">S-adenosyl-L-methionine</keyword>
<keyword id="KW-0808">Transferase</keyword>